<reference key="1">
    <citation type="journal article" date="2009" name="Appl. Environ. Microbiol.">
        <title>Three genomes from the phylum Acidobacteria provide insight into the lifestyles of these microorganisms in soils.</title>
        <authorList>
            <person name="Ward N.L."/>
            <person name="Challacombe J.F."/>
            <person name="Janssen P.H."/>
            <person name="Henrissat B."/>
            <person name="Coutinho P.M."/>
            <person name="Wu M."/>
            <person name="Xie G."/>
            <person name="Haft D.H."/>
            <person name="Sait M."/>
            <person name="Badger J."/>
            <person name="Barabote R.D."/>
            <person name="Bradley B."/>
            <person name="Brettin T.S."/>
            <person name="Brinkac L.M."/>
            <person name="Bruce D."/>
            <person name="Creasy T."/>
            <person name="Daugherty S.C."/>
            <person name="Davidsen T.M."/>
            <person name="DeBoy R.T."/>
            <person name="Detter J.C."/>
            <person name="Dodson R.J."/>
            <person name="Durkin A.S."/>
            <person name="Ganapathy A."/>
            <person name="Gwinn-Giglio M."/>
            <person name="Han C.S."/>
            <person name="Khouri H."/>
            <person name="Kiss H."/>
            <person name="Kothari S.P."/>
            <person name="Madupu R."/>
            <person name="Nelson K.E."/>
            <person name="Nelson W.C."/>
            <person name="Paulsen I."/>
            <person name="Penn K."/>
            <person name="Ren Q."/>
            <person name="Rosovitz M.J."/>
            <person name="Selengut J.D."/>
            <person name="Shrivastava S."/>
            <person name="Sullivan S.A."/>
            <person name="Tapia R."/>
            <person name="Thompson L.S."/>
            <person name="Watkins K.L."/>
            <person name="Yang Q."/>
            <person name="Yu C."/>
            <person name="Zafar N."/>
            <person name="Zhou L."/>
            <person name="Kuske C.R."/>
        </authorList>
    </citation>
    <scope>NUCLEOTIDE SEQUENCE [LARGE SCALE GENOMIC DNA]</scope>
    <source>
        <strain>Ellin345</strain>
    </source>
</reference>
<organism>
    <name type="scientific">Koribacter versatilis (strain Ellin345)</name>
    <dbReference type="NCBI Taxonomy" id="204669"/>
    <lineage>
        <taxon>Bacteria</taxon>
        <taxon>Pseudomonadati</taxon>
        <taxon>Acidobacteriota</taxon>
        <taxon>Terriglobia</taxon>
        <taxon>Terriglobales</taxon>
        <taxon>Candidatus Korobacteraceae</taxon>
        <taxon>Candidatus Korobacter</taxon>
    </lineage>
</organism>
<gene>
    <name evidence="1" type="primary">gmk</name>
    <name type="ordered locus">Acid345_3778</name>
</gene>
<keyword id="KW-0067">ATP-binding</keyword>
<keyword id="KW-0963">Cytoplasm</keyword>
<keyword id="KW-0418">Kinase</keyword>
<keyword id="KW-0547">Nucleotide-binding</keyword>
<keyword id="KW-1185">Reference proteome</keyword>
<keyword id="KW-0808">Transferase</keyword>
<sequence length="233" mass="26070">MSGTIFIISAPSGSGKSSLVNELRHVVPGLEFSISYTTRAPRGSEQNGREYFFVTREKFDAMLAADEFLEHAEVFGECYGTAKHFVTEALARGNDLVLDIDVQGAAQLKVKLPDAVGIFILPPSRKELEARLKRRNLSDHVAPEVIERRLKGAGKEIENFSHYDYILVNDNFETAVEQLRAIVLAERIRRSSTQISEENRAILEAAECCIRKNAMQRVQSILDSFKDATDPQP</sequence>
<feature type="chain" id="PRO_0000266280" description="Guanylate kinase">
    <location>
        <begin position="1"/>
        <end position="233"/>
    </location>
</feature>
<feature type="domain" description="Guanylate kinase-like" evidence="1">
    <location>
        <begin position="3"/>
        <end position="184"/>
    </location>
</feature>
<feature type="binding site" evidence="1">
    <location>
        <begin position="10"/>
        <end position="17"/>
    </location>
    <ligand>
        <name>ATP</name>
        <dbReference type="ChEBI" id="CHEBI:30616"/>
    </ligand>
</feature>
<accession>Q1IK22</accession>
<proteinExistence type="inferred from homology"/>
<comment type="function">
    <text evidence="1">Essential for recycling GMP and indirectly, cGMP.</text>
</comment>
<comment type="catalytic activity">
    <reaction evidence="1">
        <text>GMP + ATP = GDP + ADP</text>
        <dbReference type="Rhea" id="RHEA:20780"/>
        <dbReference type="ChEBI" id="CHEBI:30616"/>
        <dbReference type="ChEBI" id="CHEBI:58115"/>
        <dbReference type="ChEBI" id="CHEBI:58189"/>
        <dbReference type="ChEBI" id="CHEBI:456216"/>
        <dbReference type="EC" id="2.7.4.8"/>
    </reaction>
</comment>
<comment type="subcellular location">
    <subcellularLocation>
        <location evidence="1">Cytoplasm</location>
    </subcellularLocation>
</comment>
<comment type="similarity">
    <text evidence="1">Belongs to the guanylate kinase family.</text>
</comment>
<dbReference type="EC" id="2.7.4.8" evidence="1"/>
<dbReference type="EMBL" id="CP000360">
    <property type="protein sequence ID" value="ABF42778.1"/>
    <property type="molecule type" value="Genomic_DNA"/>
</dbReference>
<dbReference type="RefSeq" id="WP_011524577.1">
    <property type="nucleotide sequence ID" value="NC_008009.1"/>
</dbReference>
<dbReference type="SMR" id="Q1IK22"/>
<dbReference type="STRING" id="204669.Acid345_3778"/>
<dbReference type="EnsemblBacteria" id="ABF42778">
    <property type="protein sequence ID" value="ABF42778"/>
    <property type="gene ID" value="Acid345_3778"/>
</dbReference>
<dbReference type="KEGG" id="aba:Acid345_3778"/>
<dbReference type="eggNOG" id="COG0194">
    <property type="taxonomic scope" value="Bacteria"/>
</dbReference>
<dbReference type="HOGENOM" id="CLU_001715_1_1_0"/>
<dbReference type="OrthoDB" id="9808150at2"/>
<dbReference type="Proteomes" id="UP000002432">
    <property type="component" value="Chromosome"/>
</dbReference>
<dbReference type="GO" id="GO:0005829">
    <property type="term" value="C:cytosol"/>
    <property type="evidence" value="ECO:0007669"/>
    <property type="project" value="TreeGrafter"/>
</dbReference>
<dbReference type="GO" id="GO:0005524">
    <property type="term" value="F:ATP binding"/>
    <property type="evidence" value="ECO:0007669"/>
    <property type="project" value="UniProtKB-UniRule"/>
</dbReference>
<dbReference type="GO" id="GO:0004385">
    <property type="term" value="F:guanylate kinase activity"/>
    <property type="evidence" value="ECO:0007669"/>
    <property type="project" value="UniProtKB-UniRule"/>
</dbReference>
<dbReference type="CDD" id="cd00071">
    <property type="entry name" value="GMPK"/>
    <property type="match status" value="1"/>
</dbReference>
<dbReference type="FunFam" id="3.30.63.10:FF:000002">
    <property type="entry name" value="Guanylate kinase 1"/>
    <property type="match status" value="1"/>
</dbReference>
<dbReference type="Gene3D" id="3.30.63.10">
    <property type="entry name" value="Guanylate Kinase phosphate binding domain"/>
    <property type="match status" value="1"/>
</dbReference>
<dbReference type="Gene3D" id="3.40.50.300">
    <property type="entry name" value="P-loop containing nucleotide triphosphate hydrolases"/>
    <property type="match status" value="1"/>
</dbReference>
<dbReference type="HAMAP" id="MF_00328">
    <property type="entry name" value="Guanylate_kinase"/>
    <property type="match status" value="1"/>
</dbReference>
<dbReference type="InterPro" id="IPR008145">
    <property type="entry name" value="GK/Ca_channel_bsu"/>
</dbReference>
<dbReference type="InterPro" id="IPR008144">
    <property type="entry name" value="Guanylate_kin-like_dom"/>
</dbReference>
<dbReference type="InterPro" id="IPR017665">
    <property type="entry name" value="Guanylate_kinase"/>
</dbReference>
<dbReference type="InterPro" id="IPR020590">
    <property type="entry name" value="Guanylate_kinase_CS"/>
</dbReference>
<dbReference type="InterPro" id="IPR027417">
    <property type="entry name" value="P-loop_NTPase"/>
</dbReference>
<dbReference type="NCBIfam" id="TIGR03263">
    <property type="entry name" value="guanyl_kin"/>
    <property type="match status" value="1"/>
</dbReference>
<dbReference type="PANTHER" id="PTHR23117:SF13">
    <property type="entry name" value="GUANYLATE KINASE"/>
    <property type="match status" value="1"/>
</dbReference>
<dbReference type="PANTHER" id="PTHR23117">
    <property type="entry name" value="GUANYLATE KINASE-RELATED"/>
    <property type="match status" value="1"/>
</dbReference>
<dbReference type="Pfam" id="PF00625">
    <property type="entry name" value="Guanylate_kin"/>
    <property type="match status" value="1"/>
</dbReference>
<dbReference type="SMART" id="SM00072">
    <property type="entry name" value="GuKc"/>
    <property type="match status" value="1"/>
</dbReference>
<dbReference type="SUPFAM" id="SSF52540">
    <property type="entry name" value="P-loop containing nucleoside triphosphate hydrolases"/>
    <property type="match status" value="1"/>
</dbReference>
<dbReference type="PROSITE" id="PS00856">
    <property type="entry name" value="GUANYLATE_KINASE_1"/>
    <property type="match status" value="1"/>
</dbReference>
<dbReference type="PROSITE" id="PS50052">
    <property type="entry name" value="GUANYLATE_KINASE_2"/>
    <property type="match status" value="1"/>
</dbReference>
<evidence type="ECO:0000255" key="1">
    <source>
        <dbReference type="HAMAP-Rule" id="MF_00328"/>
    </source>
</evidence>
<protein>
    <recommendedName>
        <fullName evidence="1">Guanylate kinase</fullName>
        <ecNumber evidence="1">2.7.4.8</ecNumber>
    </recommendedName>
    <alternativeName>
        <fullName evidence="1">GMP kinase</fullName>
    </alternativeName>
</protein>
<name>KGUA_KORVE</name>